<reference key="1">
    <citation type="journal article" date="2008" name="PLoS Genet.">
        <title>Genomic islands in the pathogenic filamentous fungus Aspergillus fumigatus.</title>
        <authorList>
            <person name="Fedorova N.D."/>
            <person name="Khaldi N."/>
            <person name="Joardar V.S."/>
            <person name="Maiti R."/>
            <person name="Amedeo P."/>
            <person name="Anderson M.J."/>
            <person name="Crabtree J."/>
            <person name="Silva J.C."/>
            <person name="Badger J.H."/>
            <person name="Albarraq A."/>
            <person name="Angiuoli S."/>
            <person name="Bussey H."/>
            <person name="Bowyer P."/>
            <person name="Cotty P.J."/>
            <person name="Dyer P.S."/>
            <person name="Egan A."/>
            <person name="Galens K."/>
            <person name="Fraser-Liggett C.M."/>
            <person name="Haas B.J."/>
            <person name="Inman J.M."/>
            <person name="Kent R."/>
            <person name="Lemieux S."/>
            <person name="Malavazi I."/>
            <person name="Orvis J."/>
            <person name="Roemer T."/>
            <person name="Ronning C.M."/>
            <person name="Sundaram J.P."/>
            <person name="Sutton G."/>
            <person name="Turner G."/>
            <person name="Venter J.C."/>
            <person name="White O.R."/>
            <person name="Whitty B.R."/>
            <person name="Youngman P."/>
            <person name="Wolfe K.H."/>
            <person name="Goldman G.H."/>
            <person name="Wortman J.R."/>
            <person name="Jiang B."/>
            <person name="Denning D.W."/>
            <person name="Nierman W.C."/>
        </authorList>
    </citation>
    <scope>NUCLEOTIDE SEQUENCE [LARGE SCALE GENOMIC DNA]</scope>
    <source>
        <strain>ATCC 1020 / DSM 3700 / CBS 544.65 / FGSC A1164 / JCM 1740 / NRRL 181 / WB 181</strain>
    </source>
</reference>
<sequence>MSILALVEDRPTPKEVYNWRIYLLAAVASFTSCMIGYDSAFIGTTLALSSFREEFGFNTMSKTAVNLVSANIVSCYQAGAFFGAFLAYPVGHFWGRKWGLLFSGAIFTLGAGLMLGADGDRGLGLLYGGRVLAGLGVGAGSNITPIYISEMAPPSIRGRLVGVYELGWQIGGLVGFWINYGVSETLAPSHKQWIIPFAVQLIPSGLLLIGAVFLKESPRWLFSRGRREDAIKNLCWIRQLPADHIYMIEEIGAVDQALEEQRATIGLGFWKPFKAAGTNKKVMYRLFLGSMLFFWQNGSGINAINYYSPTVFKSIGLQGANTSMFSTGIFGVVKTVVTFVWLLYLIDRLGRRLLLLIGAAGASVCLFIVGAYIKIADPASNPTQEMTGGGIAAMFFFYLYTVFYTPSWNGTPWVMNSEMFEPNMRSLAQACAAASNWFWNFLISRFTPQMFAKMEYGVWFFFASLMVLSIVFVFFLLPETKGIPLESMDALFESRPIWRAHETVLARLREDEERFRHDIEESGYSKTGDQQVEHLSEDLPKV</sequence>
<gene>
    <name type="primary">qutD</name>
    <name type="ORF">NFIA_013960</name>
</gene>
<proteinExistence type="inferred from homology"/>
<dbReference type="EMBL" id="DS027688">
    <property type="protein sequence ID" value="EAW22706.1"/>
    <property type="molecule type" value="Genomic_DNA"/>
</dbReference>
<dbReference type="RefSeq" id="XP_001264603.1">
    <property type="nucleotide sequence ID" value="XM_001264602.1"/>
</dbReference>
<dbReference type="SMR" id="A1D2R3"/>
<dbReference type="STRING" id="331117.A1D2R3"/>
<dbReference type="EnsemblFungi" id="EAW22706">
    <property type="protein sequence ID" value="EAW22706"/>
    <property type="gene ID" value="NFIA_013960"/>
</dbReference>
<dbReference type="GeneID" id="4591697"/>
<dbReference type="KEGG" id="nfi:NFIA_013960"/>
<dbReference type="VEuPathDB" id="FungiDB:NFIA_013960"/>
<dbReference type="eggNOG" id="KOG0254">
    <property type="taxonomic scope" value="Eukaryota"/>
</dbReference>
<dbReference type="HOGENOM" id="CLU_001265_30_12_1"/>
<dbReference type="OMA" id="PADHIYM"/>
<dbReference type="OrthoDB" id="508119at2759"/>
<dbReference type="Proteomes" id="UP000006702">
    <property type="component" value="Unassembled WGS sequence"/>
</dbReference>
<dbReference type="GO" id="GO:0005886">
    <property type="term" value="C:plasma membrane"/>
    <property type="evidence" value="ECO:0007669"/>
    <property type="project" value="UniProtKB-SubCell"/>
</dbReference>
<dbReference type="GO" id="GO:0005351">
    <property type="term" value="F:carbohydrate:proton symporter activity"/>
    <property type="evidence" value="ECO:0007669"/>
    <property type="project" value="TreeGrafter"/>
</dbReference>
<dbReference type="GO" id="GO:0019630">
    <property type="term" value="P:quinate metabolic process"/>
    <property type="evidence" value="ECO:0007669"/>
    <property type="project" value="UniProtKB-KW"/>
</dbReference>
<dbReference type="FunFam" id="1.20.1250.20:FF:000026">
    <property type="entry name" value="MFS quinate transporter QutD"/>
    <property type="match status" value="1"/>
</dbReference>
<dbReference type="Gene3D" id="1.20.1250.20">
    <property type="entry name" value="MFS general substrate transporter like domains"/>
    <property type="match status" value="1"/>
</dbReference>
<dbReference type="InterPro" id="IPR020846">
    <property type="entry name" value="MFS_dom"/>
</dbReference>
<dbReference type="InterPro" id="IPR005828">
    <property type="entry name" value="MFS_sugar_transport-like"/>
</dbReference>
<dbReference type="InterPro" id="IPR050360">
    <property type="entry name" value="MFS_Sugar_Transporters"/>
</dbReference>
<dbReference type="InterPro" id="IPR036259">
    <property type="entry name" value="MFS_trans_sf"/>
</dbReference>
<dbReference type="InterPro" id="IPR003663">
    <property type="entry name" value="Sugar/inositol_transpt"/>
</dbReference>
<dbReference type="InterPro" id="IPR005829">
    <property type="entry name" value="Sugar_transporter_CS"/>
</dbReference>
<dbReference type="NCBIfam" id="TIGR00879">
    <property type="entry name" value="SP"/>
    <property type="match status" value="1"/>
</dbReference>
<dbReference type="PANTHER" id="PTHR48022:SF34">
    <property type="entry name" value="MAJOR FACILITATOR SUPERFAMILY (MFS) PROFILE DOMAIN-CONTAINING PROTEIN-RELATED"/>
    <property type="match status" value="1"/>
</dbReference>
<dbReference type="PANTHER" id="PTHR48022">
    <property type="entry name" value="PLASTIDIC GLUCOSE TRANSPORTER 4"/>
    <property type="match status" value="1"/>
</dbReference>
<dbReference type="Pfam" id="PF00083">
    <property type="entry name" value="Sugar_tr"/>
    <property type="match status" value="1"/>
</dbReference>
<dbReference type="PRINTS" id="PR00171">
    <property type="entry name" value="SUGRTRNSPORT"/>
</dbReference>
<dbReference type="SUPFAM" id="SSF103473">
    <property type="entry name" value="MFS general substrate transporter"/>
    <property type="match status" value="1"/>
</dbReference>
<dbReference type="PROSITE" id="PS50850">
    <property type="entry name" value="MFS"/>
    <property type="match status" value="1"/>
</dbReference>
<dbReference type="PROSITE" id="PS00216">
    <property type="entry name" value="SUGAR_TRANSPORT_1"/>
    <property type="match status" value="1"/>
</dbReference>
<dbReference type="PROSITE" id="PS00217">
    <property type="entry name" value="SUGAR_TRANSPORT_2"/>
    <property type="match status" value="1"/>
</dbReference>
<protein>
    <recommendedName>
        <fullName>Probable quinate permease</fullName>
    </recommendedName>
    <alternativeName>
        <fullName>Quinate transporter</fullName>
    </alternativeName>
</protein>
<keyword id="KW-1003">Cell membrane</keyword>
<keyword id="KW-0472">Membrane</keyword>
<keyword id="KW-0672">Quinate metabolism</keyword>
<keyword id="KW-1185">Reference proteome</keyword>
<keyword id="KW-0812">Transmembrane</keyword>
<keyword id="KW-1133">Transmembrane helix</keyword>
<keyword id="KW-0813">Transport</keyword>
<keyword id="KW-0832">Ubl conjugation</keyword>
<feature type="chain" id="PRO_0000395719" description="Probable quinate permease">
    <location>
        <begin position="1"/>
        <end position="542"/>
    </location>
</feature>
<feature type="topological domain" description="Cytoplasmic" evidence="2">
    <location>
        <begin position="1"/>
        <end position="22"/>
    </location>
</feature>
<feature type="transmembrane region" description="Helical" evidence="2">
    <location>
        <begin position="23"/>
        <end position="43"/>
    </location>
</feature>
<feature type="topological domain" description="Extracellular" evidence="2">
    <location>
        <begin position="44"/>
        <end position="66"/>
    </location>
</feature>
<feature type="transmembrane region" description="Helical" evidence="2">
    <location>
        <begin position="67"/>
        <end position="87"/>
    </location>
</feature>
<feature type="topological domain" description="Cytoplasmic" evidence="2">
    <location>
        <begin position="88"/>
        <end position="97"/>
    </location>
</feature>
<feature type="transmembrane region" description="Helical" evidence="2">
    <location>
        <begin position="98"/>
        <end position="118"/>
    </location>
</feature>
<feature type="topological domain" description="Extracellular" evidence="2">
    <location>
        <begin position="119"/>
        <end position="130"/>
    </location>
</feature>
<feature type="transmembrane region" description="Helical" evidence="2">
    <location>
        <begin position="131"/>
        <end position="151"/>
    </location>
</feature>
<feature type="topological domain" description="Cytoplasmic" evidence="2">
    <location>
        <begin position="152"/>
        <end position="159"/>
    </location>
</feature>
<feature type="transmembrane region" description="Helical" evidence="2">
    <location>
        <begin position="160"/>
        <end position="180"/>
    </location>
</feature>
<feature type="topological domain" description="Extracellular" evidence="2">
    <location>
        <begin position="181"/>
        <end position="193"/>
    </location>
</feature>
<feature type="transmembrane region" description="Helical" evidence="2">
    <location>
        <begin position="194"/>
        <end position="214"/>
    </location>
</feature>
<feature type="topological domain" description="Cytoplasmic" evidence="2">
    <location>
        <begin position="215"/>
        <end position="285"/>
    </location>
</feature>
<feature type="transmembrane region" description="Helical" evidence="2">
    <location>
        <begin position="286"/>
        <end position="306"/>
    </location>
</feature>
<feature type="topological domain" description="Extracellular" evidence="2">
    <location>
        <begin position="307"/>
        <end position="325"/>
    </location>
</feature>
<feature type="transmembrane region" description="Helical" evidence="2">
    <location>
        <begin position="326"/>
        <end position="346"/>
    </location>
</feature>
<feature type="topological domain" description="Cytoplasmic" evidence="2">
    <location>
        <begin position="347"/>
        <end position="352"/>
    </location>
</feature>
<feature type="transmembrane region" description="Helical" evidence="2">
    <location>
        <begin position="353"/>
        <end position="373"/>
    </location>
</feature>
<feature type="topological domain" description="Extracellular" evidence="2">
    <location>
        <begin position="374"/>
        <end position="387"/>
    </location>
</feature>
<feature type="transmembrane region" description="Helical" evidence="2">
    <location>
        <begin position="388"/>
        <end position="408"/>
    </location>
</feature>
<feature type="topological domain" description="Cytoplasmic" evidence="2">
    <location>
        <begin position="409"/>
        <end position="456"/>
    </location>
</feature>
<feature type="transmembrane region" description="Helical" evidence="2">
    <location>
        <begin position="457"/>
        <end position="477"/>
    </location>
</feature>
<feature type="topological domain" description="Extracellular" evidence="2">
    <location>
        <begin position="478"/>
        <end position="542"/>
    </location>
</feature>
<feature type="region of interest" description="Disordered" evidence="3">
    <location>
        <begin position="519"/>
        <end position="542"/>
    </location>
</feature>
<feature type="compositionally biased region" description="Basic and acidic residues" evidence="3">
    <location>
        <begin position="531"/>
        <end position="542"/>
    </location>
</feature>
<organism>
    <name type="scientific">Neosartorya fischeri (strain ATCC 1020 / DSM 3700 / CBS 544.65 / FGSC A1164 / JCM 1740 / NRRL 181 / WB 181)</name>
    <name type="common">Aspergillus fischerianus</name>
    <dbReference type="NCBI Taxonomy" id="331117"/>
    <lineage>
        <taxon>Eukaryota</taxon>
        <taxon>Fungi</taxon>
        <taxon>Dikarya</taxon>
        <taxon>Ascomycota</taxon>
        <taxon>Pezizomycotina</taxon>
        <taxon>Eurotiomycetes</taxon>
        <taxon>Eurotiomycetidae</taxon>
        <taxon>Eurotiales</taxon>
        <taxon>Aspergillaceae</taxon>
        <taxon>Aspergillus</taxon>
        <taxon>Aspergillus subgen. Fumigati</taxon>
    </lineage>
</organism>
<evidence type="ECO:0000250" key="1"/>
<evidence type="ECO:0000255" key="2"/>
<evidence type="ECO:0000256" key="3">
    <source>
        <dbReference type="SAM" id="MobiDB-lite"/>
    </source>
</evidence>
<evidence type="ECO:0000305" key="4"/>
<comment type="function">
    <text evidence="1">Integral membrane transporter that imports quinic acid to be catabolized as a carbon source.</text>
</comment>
<comment type="subunit">
    <text evidence="1">Interacts with creB.</text>
</comment>
<comment type="subcellular location">
    <subcellularLocation>
        <location>Cell membrane</location>
        <topology>Multi-pass membrane protein</topology>
    </subcellularLocation>
    <subcellularLocation>
        <location evidence="4">Cell membrane</location>
    </subcellularLocation>
</comment>
<comment type="PTM">
    <text>Ubiquitinated. Deubiquitinated by creB, probably to control its activity or amount.</text>
</comment>
<comment type="similarity">
    <text evidence="4">Belongs to the major facilitator superfamily. Sugar transporter (TC 2.A.1.1) family.</text>
</comment>
<accession>A1D2R3</accession>
<name>QUTD_NEOFI</name>